<feature type="chain" id="PRO_0000379067" description="Protein hook">
    <location>
        <begin position="1"/>
        <end position="677"/>
    </location>
</feature>
<feature type="domain" description="Calponin-homology (CH)" evidence="3">
    <location>
        <begin position="6"/>
        <end position="123"/>
    </location>
</feature>
<feature type="coiled-coil region" evidence="2">
    <location>
        <begin position="135"/>
        <end position="436"/>
    </location>
</feature>
<feature type="coiled-coil region" evidence="2">
    <location>
        <begin position="478"/>
        <end position="588"/>
    </location>
</feature>
<keyword id="KW-0175">Coiled coil</keyword>
<keyword id="KW-0963">Cytoplasm</keyword>
<keyword id="KW-0206">Cytoskeleton</keyword>
<keyword id="KW-0217">Developmental protein</keyword>
<keyword id="KW-0254">Endocytosis</keyword>
<keyword id="KW-0967">Endosome</keyword>
<keyword id="KW-0493">Microtubule</keyword>
<keyword id="KW-1185">Reference proteome</keyword>
<keyword id="KW-0770">Synapse</keyword>
<sequence length="677" mass="76704">MSAAKNEMYYSLLEWFKTLNLNAPHADAESLADGVAVAQALNQFAPESFTDSWLAKIKASAVGINWRLRMSNLKKVTQSLYDYYSEVLNYTLSDFVKPDVQRIAEKCDLVELERLLQLVLGCAVNCAKKQSYITEIMCLEEELQANIMRALQELESSRNAAEGGIVTSLSRSSISGMLDGKVLQEERDAMAQKCFETEKKMLLLIDEKTNLQQELQRVQKEFARLEHSSTVIGDDGVSLGPVQTGSVRYNELRRQLDLLKEELLQSEGAREDLKLKAQQQETDLLHMQMRIDELLKSTAEVTTLKDEVDVLRESNDKLKICEGQLDTYKKKLEDYNDLKKQVKILEERSADYVQQNAQFEEDAKRYANTKGQIELFKKEIQDLHTKLDSESSKNVKLEFDNKNLEGKNLALQRAKDSLLKERDNLRETVDELKCGHLSSNSGLTGTAVSRELQPPATVEKMQRLEAENKALREGQGGQTALAQLLDDANKRCENLREQLKSANERILSLSHASQSDDPILKESEFGKQIKQLMELNEQKTLQLEESVTQSSSLQCKVTQLETNLTAREQEVMAYDAKYRKCLEKAKEVIKSFDPRIASAIDASALEKYFDVVEEEPKPKMSVMEEQLMTSAFYRLGVNAQRDAVDSKLAILMGSGQTFLARQRQSAPRKSLSAMKSK</sequence>
<organism>
    <name type="scientific">Drosophila pseudoobscura pseudoobscura</name>
    <name type="common">Fruit fly</name>
    <dbReference type="NCBI Taxonomy" id="46245"/>
    <lineage>
        <taxon>Eukaryota</taxon>
        <taxon>Metazoa</taxon>
        <taxon>Ecdysozoa</taxon>
        <taxon>Arthropoda</taxon>
        <taxon>Hexapoda</taxon>
        <taxon>Insecta</taxon>
        <taxon>Pterygota</taxon>
        <taxon>Neoptera</taxon>
        <taxon>Endopterygota</taxon>
        <taxon>Diptera</taxon>
        <taxon>Brachycera</taxon>
        <taxon>Muscomorpha</taxon>
        <taxon>Ephydroidea</taxon>
        <taxon>Drosophilidae</taxon>
        <taxon>Drosophila</taxon>
        <taxon>Sophophora</taxon>
    </lineage>
</organism>
<accession>Q29N92</accession>
<dbReference type="EMBL" id="CH379060">
    <property type="protein sequence ID" value="EAL33450.1"/>
    <property type="molecule type" value="Genomic_DNA"/>
</dbReference>
<dbReference type="SMR" id="Q29N92"/>
<dbReference type="FunCoup" id="Q29N92">
    <property type="interactions" value="528"/>
</dbReference>
<dbReference type="STRING" id="46245.Q29N92"/>
<dbReference type="EnsemblMetazoa" id="FBtr0281903">
    <property type="protein sequence ID" value="FBpp0280341"/>
    <property type="gene ID" value="FBgn0070526"/>
</dbReference>
<dbReference type="GeneID" id="4817456"/>
<dbReference type="KEGG" id="dpo:4817456"/>
<dbReference type="eggNOG" id="ENOG502QQM8">
    <property type="taxonomic scope" value="Eukaryota"/>
</dbReference>
<dbReference type="HOGENOM" id="CLU_011214_1_0_1"/>
<dbReference type="InParanoid" id="Q29N92"/>
<dbReference type="OMA" id="DAKYRKC"/>
<dbReference type="PhylomeDB" id="Q29N92"/>
<dbReference type="Proteomes" id="UP000001819">
    <property type="component" value="Chromosome 4"/>
</dbReference>
<dbReference type="Bgee" id="FBgn0070526">
    <property type="expression patterns" value="Expressed in insect adult head and 2 other cell types or tissues"/>
</dbReference>
<dbReference type="ExpressionAtlas" id="Q29N92">
    <property type="expression patterns" value="baseline"/>
</dbReference>
<dbReference type="GO" id="GO:0005813">
    <property type="term" value="C:centrosome"/>
    <property type="evidence" value="ECO:0007669"/>
    <property type="project" value="TreeGrafter"/>
</dbReference>
<dbReference type="GO" id="GO:0005768">
    <property type="term" value="C:endosome"/>
    <property type="evidence" value="ECO:0000250"/>
    <property type="project" value="UniProtKB"/>
</dbReference>
<dbReference type="GO" id="GO:0005874">
    <property type="term" value="C:microtubule"/>
    <property type="evidence" value="ECO:0007669"/>
    <property type="project" value="UniProtKB-KW"/>
</dbReference>
<dbReference type="GO" id="GO:0045202">
    <property type="term" value="C:synapse"/>
    <property type="evidence" value="ECO:0000250"/>
    <property type="project" value="UniProtKB"/>
</dbReference>
<dbReference type="GO" id="GO:0051959">
    <property type="term" value="F:dynein light intermediate chain binding"/>
    <property type="evidence" value="ECO:0007669"/>
    <property type="project" value="TreeGrafter"/>
</dbReference>
<dbReference type="GO" id="GO:0008017">
    <property type="term" value="F:microtubule binding"/>
    <property type="evidence" value="ECO:0000250"/>
    <property type="project" value="UniProtKB"/>
</dbReference>
<dbReference type="GO" id="GO:0031122">
    <property type="term" value="P:cytoplasmic microtubule organization"/>
    <property type="evidence" value="ECO:0007669"/>
    <property type="project" value="InterPro"/>
</dbReference>
<dbReference type="GO" id="GO:0030705">
    <property type="term" value="P:cytoskeleton-dependent intracellular transport"/>
    <property type="evidence" value="ECO:0000250"/>
    <property type="project" value="UniProtKB"/>
</dbReference>
<dbReference type="GO" id="GO:0008340">
    <property type="term" value="P:determination of adult lifespan"/>
    <property type="evidence" value="ECO:0000250"/>
    <property type="project" value="UniProtKB"/>
</dbReference>
<dbReference type="GO" id="GO:0006897">
    <property type="term" value="P:endocytosis"/>
    <property type="evidence" value="ECO:0000250"/>
    <property type="project" value="UniProtKB"/>
</dbReference>
<dbReference type="CDD" id="cd22222">
    <property type="entry name" value="HkD_Hook"/>
    <property type="match status" value="1"/>
</dbReference>
<dbReference type="FunFam" id="1.10.418.10:FF:000024">
    <property type="entry name" value="Hook homolog 3 (Drosophila)"/>
    <property type="match status" value="1"/>
</dbReference>
<dbReference type="Gene3D" id="1.10.418.10">
    <property type="entry name" value="Calponin-like domain"/>
    <property type="match status" value="1"/>
</dbReference>
<dbReference type="InterPro" id="IPR001715">
    <property type="entry name" value="CH_dom"/>
</dbReference>
<dbReference type="InterPro" id="IPR036872">
    <property type="entry name" value="CH_dom_sf"/>
</dbReference>
<dbReference type="InterPro" id="IPR008636">
    <property type="entry name" value="Hook_C"/>
</dbReference>
<dbReference type="InterPro" id="IPR043936">
    <property type="entry name" value="HOOK_N"/>
</dbReference>
<dbReference type="PANTHER" id="PTHR18947">
    <property type="entry name" value="HOOK PROTEINS"/>
    <property type="match status" value="1"/>
</dbReference>
<dbReference type="PANTHER" id="PTHR18947:SF39">
    <property type="entry name" value="PROTEIN HOOK"/>
    <property type="match status" value="1"/>
</dbReference>
<dbReference type="Pfam" id="PF05622">
    <property type="entry name" value="HOOK"/>
    <property type="match status" value="1"/>
</dbReference>
<dbReference type="Pfam" id="PF19047">
    <property type="entry name" value="HOOK_N"/>
    <property type="match status" value="1"/>
</dbReference>
<dbReference type="SUPFAM" id="SSF116907">
    <property type="entry name" value="Hook domain"/>
    <property type="match status" value="1"/>
</dbReference>
<dbReference type="PROSITE" id="PS50021">
    <property type="entry name" value="CH"/>
    <property type="match status" value="1"/>
</dbReference>
<comment type="function">
    <text evidence="1">Involved in endocytic trafficking by stabilizing organelles of the endocytic pathway. Probably acts as a cytoskeletal linker protein required to tether endosome vesicles to the cytoskeleton. Involved in modulation of endocytosis at stages required for down-regulation of membrane proteins that control synapse size. Not involved in synaptic vesicle recycling. Required in R7 cells for boss endocytosis into multivesicular bodies (MVBs). Has a role in regulating adult longevity.</text>
</comment>
<comment type="subunit">
    <text evidence="1">Homodimer. Interacts with microtubules via its N-terminus.</text>
</comment>
<comment type="subcellular location">
    <subcellularLocation>
        <location evidence="1">Cytoplasm</location>
        <location evidence="1">Cytoskeleton</location>
    </subcellularLocation>
    <subcellularLocation>
        <location evidence="1">Endosome</location>
    </subcellularLocation>
    <subcellularLocation>
        <location evidence="1">Synapse</location>
    </subcellularLocation>
    <text evidence="1">Enriched at neuromuscular synapses, in both presynaptic and postsynaptic regions.</text>
</comment>
<comment type="domain">
    <text evidence="1">The coiled coil domain mediates homodimerization.</text>
</comment>
<comment type="similarity">
    <text evidence="4">Belongs to the hook family.</text>
</comment>
<name>HOOK_DROPS</name>
<evidence type="ECO:0000250" key="1">
    <source>
        <dbReference type="UniProtKB" id="Q24185"/>
    </source>
</evidence>
<evidence type="ECO:0000255" key="2"/>
<evidence type="ECO:0000255" key="3">
    <source>
        <dbReference type="PROSITE-ProRule" id="PRU00044"/>
    </source>
</evidence>
<evidence type="ECO:0000305" key="4"/>
<reference key="1">
    <citation type="journal article" date="2005" name="Genome Res.">
        <title>Comparative genome sequencing of Drosophila pseudoobscura: chromosomal, gene, and cis-element evolution.</title>
        <authorList>
            <person name="Richards S."/>
            <person name="Liu Y."/>
            <person name="Bettencourt B.R."/>
            <person name="Hradecky P."/>
            <person name="Letovsky S."/>
            <person name="Nielsen R."/>
            <person name="Thornton K."/>
            <person name="Hubisz M.J."/>
            <person name="Chen R."/>
            <person name="Meisel R.P."/>
            <person name="Couronne O."/>
            <person name="Hua S."/>
            <person name="Smith M.A."/>
            <person name="Zhang P."/>
            <person name="Liu J."/>
            <person name="Bussemaker H.J."/>
            <person name="van Batenburg M.F."/>
            <person name="Howells S.L."/>
            <person name="Scherer S.E."/>
            <person name="Sodergren E."/>
            <person name="Matthews B.B."/>
            <person name="Crosby M.A."/>
            <person name="Schroeder A.J."/>
            <person name="Ortiz-Barrientos D."/>
            <person name="Rives C.M."/>
            <person name="Metzker M.L."/>
            <person name="Muzny D.M."/>
            <person name="Scott G."/>
            <person name="Steffen D."/>
            <person name="Wheeler D.A."/>
            <person name="Worley K.C."/>
            <person name="Havlak P."/>
            <person name="Durbin K.J."/>
            <person name="Egan A."/>
            <person name="Gill R."/>
            <person name="Hume J."/>
            <person name="Morgan M.B."/>
            <person name="Miner G."/>
            <person name="Hamilton C."/>
            <person name="Huang Y."/>
            <person name="Waldron L."/>
            <person name="Verduzco D."/>
            <person name="Clerc-Blankenburg K.P."/>
            <person name="Dubchak I."/>
            <person name="Noor M.A.F."/>
            <person name="Anderson W."/>
            <person name="White K.P."/>
            <person name="Clark A.G."/>
            <person name="Schaeffer S.W."/>
            <person name="Gelbart W.M."/>
            <person name="Weinstock G.M."/>
            <person name="Gibbs R.A."/>
        </authorList>
    </citation>
    <scope>NUCLEOTIDE SEQUENCE [LARGE SCALE GENOMIC DNA]</scope>
    <source>
        <strain>MV2-25 / Tucson 14011-0121.94</strain>
    </source>
</reference>
<proteinExistence type="inferred from homology"/>
<protein>
    <recommendedName>
        <fullName>Protein hook</fullName>
    </recommendedName>
</protein>
<gene>
    <name evidence="1" type="primary">hook</name>
    <name evidence="1" type="synonym">hk</name>
    <name type="ORF">GA10469</name>
</gene>